<accession>Q2N5V9</accession>
<reference key="1">
    <citation type="journal article" date="2009" name="J. Bacteriol.">
        <title>Complete genome sequence of Erythrobacter litoralis HTCC2594.</title>
        <authorList>
            <person name="Oh H.M."/>
            <person name="Giovannoni S.J."/>
            <person name="Ferriera S."/>
            <person name="Johnson J."/>
            <person name="Cho J.C."/>
        </authorList>
    </citation>
    <scope>NUCLEOTIDE SEQUENCE [LARGE SCALE GENOMIC DNA]</scope>
    <source>
        <strain>HTCC2594</strain>
    </source>
</reference>
<comment type="function">
    <text evidence="1">This protein is involved in the repair of mismatches in DNA. It is possible that it carries out the mismatch recognition step. This protein has a weak ATPase activity.</text>
</comment>
<comment type="similarity">
    <text evidence="1">Belongs to the DNA mismatch repair MutS family.</text>
</comment>
<gene>
    <name evidence="1" type="primary">mutS</name>
    <name type="ordered locus">ELI_14200</name>
</gene>
<protein>
    <recommendedName>
        <fullName evidence="1">DNA mismatch repair protein MutS</fullName>
    </recommendedName>
</protein>
<keyword id="KW-0067">ATP-binding</keyword>
<keyword id="KW-0227">DNA damage</keyword>
<keyword id="KW-0234">DNA repair</keyword>
<keyword id="KW-0238">DNA-binding</keyword>
<keyword id="KW-0547">Nucleotide-binding</keyword>
<keyword id="KW-1185">Reference proteome</keyword>
<sequence>MAGKSTPMMEQYLALKAEASAGGDDCLLFYRMGDFFELFFEDAKVASGILDIALTARGKDSGEPVPMCGVPVHSAEGYLARLIKAGQRVAIAEQVETPEEAKARARREGKPVSKVLVKRDIVRFVTAGTLTEEALLEPRRANVLAAVCEVRGTLGIAHCDISTGRMELEECAPDAMDAALARLGASEVVAPENWDGAPADATLRPPSEFASDEGEARLKAIHDVATLDGFGDFSRAMLAAAGGLIGYLDHAGRGTLPFLLPPVVARGEAKLAMDAATRSSLEILVSQQDARSGSLIAAVDRCVTGAGARQLAEDLAAPLTEREPIERRLALVHFFHADPLLRADLREVMRAVPDLARALGRIVAGRGSPRDLGQIRDGLAEARRIRDYLASKPDRPALLDDLLPAMGGHGALVDHLQRALVPAPPTAREQGGYIAAGFDAALDELRDVSGNARRAIAALETRYRGETGIERLKIKHNGVLGYFIEVPAKHADALMAPDSGFTHRQTMAGAVRFNSLQLHEEASRISEAGGRALAAEEAHFEELVATVGDAREAIARTADALARIDVAAGLAERAAEGDWCKPAITDERVLDIVGGRHPVVEAALKQAGDRFVPNDCTLSGSDRLWLIGGPNMGGKSTFLRQNALIVLLAQAGSYVPASTATIGLVDRLFSRVGASDNLARGRSTFMVEMVETAAILAQASDRSFVILDEVGRGTSTYDGLALAWAVVEAVHETIQCRCLFATHYHELARLAETCDSLSLHHVRAREWKGDLVLLHELAEGPADRSYGLAVAKLAGVPAPVVKRARSVLEKLEKGREETGGLAAGLGELPLFAAALEERPEKIGDSMREKLAALDIDALSPREALDLLYALKTEASQTED</sequence>
<name>MUTS_ERYLH</name>
<proteinExistence type="inferred from homology"/>
<feature type="chain" id="PRO_0000335150" description="DNA mismatch repair protein MutS">
    <location>
        <begin position="1"/>
        <end position="879"/>
    </location>
</feature>
<feature type="binding site" evidence="1">
    <location>
        <begin position="629"/>
        <end position="636"/>
    </location>
    <ligand>
        <name>ATP</name>
        <dbReference type="ChEBI" id="CHEBI:30616"/>
    </ligand>
</feature>
<dbReference type="EMBL" id="CP000157">
    <property type="protein sequence ID" value="ABC64932.1"/>
    <property type="molecule type" value="Genomic_DNA"/>
</dbReference>
<dbReference type="RefSeq" id="WP_011415754.1">
    <property type="nucleotide sequence ID" value="NC_007722.1"/>
</dbReference>
<dbReference type="SMR" id="Q2N5V9"/>
<dbReference type="STRING" id="314225.ELI_14200"/>
<dbReference type="KEGG" id="eli:ELI_14200"/>
<dbReference type="eggNOG" id="COG0249">
    <property type="taxonomic scope" value="Bacteria"/>
</dbReference>
<dbReference type="HOGENOM" id="CLU_002472_3_1_5"/>
<dbReference type="OrthoDB" id="9802448at2"/>
<dbReference type="Proteomes" id="UP000008808">
    <property type="component" value="Chromosome"/>
</dbReference>
<dbReference type="GO" id="GO:0005829">
    <property type="term" value="C:cytosol"/>
    <property type="evidence" value="ECO:0007669"/>
    <property type="project" value="TreeGrafter"/>
</dbReference>
<dbReference type="GO" id="GO:0005524">
    <property type="term" value="F:ATP binding"/>
    <property type="evidence" value="ECO:0007669"/>
    <property type="project" value="UniProtKB-UniRule"/>
</dbReference>
<dbReference type="GO" id="GO:0140664">
    <property type="term" value="F:ATP-dependent DNA damage sensor activity"/>
    <property type="evidence" value="ECO:0007669"/>
    <property type="project" value="InterPro"/>
</dbReference>
<dbReference type="GO" id="GO:0003684">
    <property type="term" value="F:damaged DNA binding"/>
    <property type="evidence" value="ECO:0007669"/>
    <property type="project" value="UniProtKB-UniRule"/>
</dbReference>
<dbReference type="GO" id="GO:0030983">
    <property type="term" value="F:mismatched DNA binding"/>
    <property type="evidence" value="ECO:0007669"/>
    <property type="project" value="InterPro"/>
</dbReference>
<dbReference type="GO" id="GO:0006298">
    <property type="term" value="P:mismatch repair"/>
    <property type="evidence" value="ECO:0007669"/>
    <property type="project" value="UniProtKB-UniRule"/>
</dbReference>
<dbReference type="CDD" id="cd03284">
    <property type="entry name" value="ABC_MutS1"/>
    <property type="match status" value="1"/>
</dbReference>
<dbReference type="Gene3D" id="1.10.1420.10">
    <property type="match status" value="2"/>
</dbReference>
<dbReference type="Gene3D" id="6.10.140.430">
    <property type="match status" value="1"/>
</dbReference>
<dbReference type="Gene3D" id="3.40.1170.10">
    <property type="entry name" value="DNA repair protein MutS, domain I"/>
    <property type="match status" value="1"/>
</dbReference>
<dbReference type="Gene3D" id="3.30.420.110">
    <property type="entry name" value="MutS, connector domain"/>
    <property type="match status" value="1"/>
</dbReference>
<dbReference type="Gene3D" id="3.40.50.300">
    <property type="entry name" value="P-loop containing nucleotide triphosphate hydrolases"/>
    <property type="match status" value="1"/>
</dbReference>
<dbReference type="HAMAP" id="MF_00096">
    <property type="entry name" value="MutS"/>
    <property type="match status" value="1"/>
</dbReference>
<dbReference type="InterPro" id="IPR005748">
    <property type="entry name" value="DNA_mismatch_repair_MutS"/>
</dbReference>
<dbReference type="InterPro" id="IPR007695">
    <property type="entry name" value="DNA_mismatch_repair_MutS-lik_N"/>
</dbReference>
<dbReference type="InterPro" id="IPR017261">
    <property type="entry name" value="DNA_mismatch_repair_MutS/MSH"/>
</dbReference>
<dbReference type="InterPro" id="IPR000432">
    <property type="entry name" value="DNA_mismatch_repair_MutS_C"/>
</dbReference>
<dbReference type="InterPro" id="IPR007861">
    <property type="entry name" value="DNA_mismatch_repair_MutS_clamp"/>
</dbReference>
<dbReference type="InterPro" id="IPR007696">
    <property type="entry name" value="DNA_mismatch_repair_MutS_core"/>
</dbReference>
<dbReference type="InterPro" id="IPR016151">
    <property type="entry name" value="DNA_mismatch_repair_MutS_N"/>
</dbReference>
<dbReference type="InterPro" id="IPR036187">
    <property type="entry name" value="DNA_mismatch_repair_MutS_sf"/>
</dbReference>
<dbReference type="InterPro" id="IPR007860">
    <property type="entry name" value="DNA_mmatch_repair_MutS_con_dom"/>
</dbReference>
<dbReference type="InterPro" id="IPR045076">
    <property type="entry name" value="MutS"/>
</dbReference>
<dbReference type="InterPro" id="IPR036678">
    <property type="entry name" value="MutS_con_dom_sf"/>
</dbReference>
<dbReference type="InterPro" id="IPR027417">
    <property type="entry name" value="P-loop_NTPase"/>
</dbReference>
<dbReference type="NCBIfam" id="TIGR01070">
    <property type="entry name" value="mutS1"/>
    <property type="match status" value="1"/>
</dbReference>
<dbReference type="NCBIfam" id="NF003810">
    <property type="entry name" value="PRK05399.1"/>
    <property type="match status" value="1"/>
</dbReference>
<dbReference type="PANTHER" id="PTHR11361:SF34">
    <property type="entry name" value="DNA MISMATCH REPAIR PROTEIN MSH1, MITOCHONDRIAL"/>
    <property type="match status" value="1"/>
</dbReference>
<dbReference type="PANTHER" id="PTHR11361">
    <property type="entry name" value="DNA MISMATCH REPAIR PROTEIN MUTS FAMILY MEMBER"/>
    <property type="match status" value="1"/>
</dbReference>
<dbReference type="Pfam" id="PF01624">
    <property type="entry name" value="MutS_I"/>
    <property type="match status" value="1"/>
</dbReference>
<dbReference type="Pfam" id="PF05188">
    <property type="entry name" value="MutS_II"/>
    <property type="match status" value="1"/>
</dbReference>
<dbReference type="Pfam" id="PF05192">
    <property type="entry name" value="MutS_III"/>
    <property type="match status" value="1"/>
</dbReference>
<dbReference type="Pfam" id="PF05190">
    <property type="entry name" value="MutS_IV"/>
    <property type="match status" value="1"/>
</dbReference>
<dbReference type="Pfam" id="PF00488">
    <property type="entry name" value="MutS_V"/>
    <property type="match status" value="1"/>
</dbReference>
<dbReference type="PIRSF" id="PIRSF037677">
    <property type="entry name" value="DNA_mis_repair_Msh6"/>
    <property type="match status" value="1"/>
</dbReference>
<dbReference type="SMART" id="SM00534">
    <property type="entry name" value="MUTSac"/>
    <property type="match status" value="1"/>
</dbReference>
<dbReference type="SMART" id="SM00533">
    <property type="entry name" value="MUTSd"/>
    <property type="match status" value="1"/>
</dbReference>
<dbReference type="SUPFAM" id="SSF55271">
    <property type="entry name" value="DNA repair protein MutS, domain I"/>
    <property type="match status" value="1"/>
</dbReference>
<dbReference type="SUPFAM" id="SSF53150">
    <property type="entry name" value="DNA repair protein MutS, domain II"/>
    <property type="match status" value="1"/>
</dbReference>
<dbReference type="SUPFAM" id="SSF48334">
    <property type="entry name" value="DNA repair protein MutS, domain III"/>
    <property type="match status" value="1"/>
</dbReference>
<dbReference type="SUPFAM" id="SSF52540">
    <property type="entry name" value="P-loop containing nucleoside triphosphate hydrolases"/>
    <property type="match status" value="1"/>
</dbReference>
<dbReference type="PROSITE" id="PS00486">
    <property type="entry name" value="DNA_MISMATCH_REPAIR_2"/>
    <property type="match status" value="1"/>
</dbReference>
<organism>
    <name type="scientific">Erythrobacter litoralis (strain HTCC2594)</name>
    <dbReference type="NCBI Taxonomy" id="314225"/>
    <lineage>
        <taxon>Bacteria</taxon>
        <taxon>Pseudomonadati</taxon>
        <taxon>Pseudomonadota</taxon>
        <taxon>Alphaproteobacteria</taxon>
        <taxon>Sphingomonadales</taxon>
        <taxon>Erythrobacteraceae</taxon>
        <taxon>Erythrobacter/Porphyrobacter group</taxon>
        <taxon>Erythrobacter</taxon>
    </lineage>
</organism>
<evidence type="ECO:0000255" key="1">
    <source>
        <dbReference type="HAMAP-Rule" id="MF_00096"/>
    </source>
</evidence>